<proteinExistence type="evidence at protein level"/>
<gene>
    <name type="primary">Gnptg</name>
    <name type="synonym">Mdcp1</name>
</gene>
<sequence length="307" mass="34169">MAGRLAGFLMLLGLASQGPAPAYAGKMKVVEEPNTFGLNNPFLPQASRLQPKREPSAVSGPLHLFRLAGKCFSLVESTYKYEFCPFHNVTQHEQTFRWNAYSGILGIWHEWEIINNTFKGMWMTDGDSCHSRSRQSKVELTCGKINRLAHVSEPSTCVYALTFETPLVCHPHSLLVYPTLSEALQQRWDQVEQDLADELITPQGYEKLLRVLFEDAGYLKVPGETHPTQLAGGSKGLGLETLDNCRKAHAELSQEVQRLTSLLQQHGIPHTQPTETTHSQHLGQQLPIGAIAAEHLRSDPGLRGNIL</sequence>
<organism>
    <name type="scientific">Mus musculus</name>
    <name type="common">Mouse</name>
    <dbReference type="NCBI Taxonomy" id="10090"/>
    <lineage>
        <taxon>Eukaryota</taxon>
        <taxon>Metazoa</taxon>
        <taxon>Chordata</taxon>
        <taxon>Craniata</taxon>
        <taxon>Vertebrata</taxon>
        <taxon>Euteleostomi</taxon>
        <taxon>Mammalia</taxon>
        <taxon>Eutheria</taxon>
        <taxon>Euarchontoglires</taxon>
        <taxon>Glires</taxon>
        <taxon>Rodentia</taxon>
        <taxon>Myomorpha</taxon>
        <taxon>Muroidea</taxon>
        <taxon>Muridae</taxon>
        <taxon>Murinae</taxon>
        <taxon>Mus</taxon>
        <taxon>Mus</taxon>
    </lineage>
</organism>
<name>GNPTG_MOUSE</name>
<evidence type="ECO:0000250" key="1"/>
<evidence type="ECO:0000255" key="2"/>
<evidence type="ECO:0000255" key="3">
    <source>
        <dbReference type="PROSITE-ProRule" id="PRU01260"/>
    </source>
</evidence>
<evidence type="ECO:0000255" key="4">
    <source>
        <dbReference type="PROSITE-ProRule" id="PRU01262"/>
    </source>
</evidence>
<evidence type="ECO:0000269" key="5">
    <source>
    </source>
</evidence>
<evidence type="ECO:0000269" key="6">
    <source>
    </source>
</evidence>
<evidence type="ECO:0000303" key="7">
    <source>
    </source>
</evidence>
<protein>
    <recommendedName>
        <fullName>N-acetylglucosamine-1-phosphotransferase subunit gamma</fullName>
    </recommendedName>
    <alternativeName>
        <fullName>GlcNAc-1-phosphotransferase subunit gamma</fullName>
    </alternativeName>
    <alternativeName>
        <fullName>M6PR domain-containing protein 1</fullName>
    </alternativeName>
    <alternativeName>
        <fullName>UDP-N-acetylglucosamine-1-phosphotransferase subunit gamma</fullName>
    </alternativeName>
</protein>
<keyword id="KW-0025">Alternative splicing</keyword>
<keyword id="KW-1015">Disulfide bond</keyword>
<keyword id="KW-0325">Glycoprotein</keyword>
<keyword id="KW-0333">Golgi apparatus</keyword>
<keyword id="KW-1185">Reference proteome</keyword>
<keyword id="KW-0964">Secreted</keyword>
<keyword id="KW-0732">Signal</keyword>
<reference key="1">
    <citation type="journal article" date="2005" name="Gene">
        <title>Overexpression of mouse GlcNAc-1-phosphotransferase-gamma subunit in cells induced an I-cell-like phenotype of mucolipidosis.</title>
        <authorList>
            <person name="Sun Q."/>
            <person name="Li J."/>
            <person name="Wang C."/>
            <person name="Huang X."/>
            <person name="Huang H."/>
            <person name="Du D."/>
            <person name="Liang Y."/>
            <person name="Han H."/>
        </authorList>
    </citation>
    <scope>NUCLEOTIDE SEQUENCE [MRNA] (ISOFORM 1)</scope>
    <scope>FUNCTION</scope>
    <scope>SUBCELLULAR LOCATION</scope>
    <scope>TISSUE SPECIFICITY</scope>
</reference>
<reference key="2">
    <citation type="journal article" date="2005" name="Science">
        <title>The transcriptional landscape of the mammalian genome.</title>
        <authorList>
            <person name="Carninci P."/>
            <person name="Kasukawa T."/>
            <person name="Katayama S."/>
            <person name="Gough J."/>
            <person name="Frith M.C."/>
            <person name="Maeda N."/>
            <person name="Oyama R."/>
            <person name="Ravasi T."/>
            <person name="Lenhard B."/>
            <person name="Wells C."/>
            <person name="Kodzius R."/>
            <person name="Shimokawa K."/>
            <person name="Bajic V.B."/>
            <person name="Brenner S.E."/>
            <person name="Batalov S."/>
            <person name="Forrest A.R."/>
            <person name="Zavolan M."/>
            <person name="Davis M.J."/>
            <person name="Wilming L.G."/>
            <person name="Aidinis V."/>
            <person name="Allen J.E."/>
            <person name="Ambesi-Impiombato A."/>
            <person name="Apweiler R."/>
            <person name="Aturaliya R.N."/>
            <person name="Bailey T.L."/>
            <person name="Bansal M."/>
            <person name="Baxter L."/>
            <person name="Beisel K.W."/>
            <person name="Bersano T."/>
            <person name="Bono H."/>
            <person name="Chalk A.M."/>
            <person name="Chiu K.P."/>
            <person name="Choudhary V."/>
            <person name="Christoffels A."/>
            <person name="Clutterbuck D.R."/>
            <person name="Crowe M.L."/>
            <person name="Dalla E."/>
            <person name="Dalrymple B.P."/>
            <person name="de Bono B."/>
            <person name="Della Gatta G."/>
            <person name="di Bernardo D."/>
            <person name="Down T."/>
            <person name="Engstrom P."/>
            <person name="Fagiolini M."/>
            <person name="Faulkner G."/>
            <person name="Fletcher C.F."/>
            <person name="Fukushima T."/>
            <person name="Furuno M."/>
            <person name="Futaki S."/>
            <person name="Gariboldi M."/>
            <person name="Georgii-Hemming P."/>
            <person name="Gingeras T.R."/>
            <person name="Gojobori T."/>
            <person name="Green R.E."/>
            <person name="Gustincich S."/>
            <person name="Harbers M."/>
            <person name="Hayashi Y."/>
            <person name="Hensch T.K."/>
            <person name="Hirokawa N."/>
            <person name="Hill D."/>
            <person name="Huminiecki L."/>
            <person name="Iacono M."/>
            <person name="Ikeo K."/>
            <person name="Iwama A."/>
            <person name="Ishikawa T."/>
            <person name="Jakt M."/>
            <person name="Kanapin A."/>
            <person name="Katoh M."/>
            <person name="Kawasawa Y."/>
            <person name="Kelso J."/>
            <person name="Kitamura H."/>
            <person name="Kitano H."/>
            <person name="Kollias G."/>
            <person name="Krishnan S.P."/>
            <person name="Kruger A."/>
            <person name="Kummerfeld S.K."/>
            <person name="Kurochkin I.V."/>
            <person name="Lareau L.F."/>
            <person name="Lazarevic D."/>
            <person name="Lipovich L."/>
            <person name="Liu J."/>
            <person name="Liuni S."/>
            <person name="McWilliam S."/>
            <person name="Madan Babu M."/>
            <person name="Madera M."/>
            <person name="Marchionni L."/>
            <person name="Matsuda H."/>
            <person name="Matsuzawa S."/>
            <person name="Miki H."/>
            <person name="Mignone F."/>
            <person name="Miyake S."/>
            <person name="Morris K."/>
            <person name="Mottagui-Tabar S."/>
            <person name="Mulder N."/>
            <person name="Nakano N."/>
            <person name="Nakauchi H."/>
            <person name="Ng P."/>
            <person name="Nilsson R."/>
            <person name="Nishiguchi S."/>
            <person name="Nishikawa S."/>
            <person name="Nori F."/>
            <person name="Ohara O."/>
            <person name="Okazaki Y."/>
            <person name="Orlando V."/>
            <person name="Pang K.C."/>
            <person name="Pavan W.J."/>
            <person name="Pavesi G."/>
            <person name="Pesole G."/>
            <person name="Petrovsky N."/>
            <person name="Piazza S."/>
            <person name="Reed J."/>
            <person name="Reid J.F."/>
            <person name="Ring B.Z."/>
            <person name="Ringwald M."/>
            <person name="Rost B."/>
            <person name="Ruan Y."/>
            <person name="Salzberg S.L."/>
            <person name="Sandelin A."/>
            <person name="Schneider C."/>
            <person name="Schoenbach C."/>
            <person name="Sekiguchi K."/>
            <person name="Semple C.A."/>
            <person name="Seno S."/>
            <person name="Sessa L."/>
            <person name="Sheng Y."/>
            <person name="Shibata Y."/>
            <person name="Shimada H."/>
            <person name="Shimada K."/>
            <person name="Silva D."/>
            <person name="Sinclair B."/>
            <person name="Sperling S."/>
            <person name="Stupka E."/>
            <person name="Sugiura K."/>
            <person name="Sultana R."/>
            <person name="Takenaka Y."/>
            <person name="Taki K."/>
            <person name="Tammoja K."/>
            <person name="Tan S.L."/>
            <person name="Tang S."/>
            <person name="Taylor M.S."/>
            <person name="Tegner J."/>
            <person name="Teichmann S.A."/>
            <person name="Ueda H.R."/>
            <person name="van Nimwegen E."/>
            <person name="Verardo R."/>
            <person name="Wei C.L."/>
            <person name="Yagi K."/>
            <person name="Yamanishi H."/>
            <person name="Zabarovsky E."/>
            <person name="Zhu S."/>
            <person name="Zimmer A."/>
            <person name="Hide W."/>
            <person name="Bult C."/>
            <person name="Grimmond S.M."/>
            <person name="Teasdale R.D."/>
            <person name="Liu E.T."/>
            <person name="Brusic V."/>
            <person name="Quackenbush J."/>
            <person name="Wahlestedt C."/>
            <person name="Mattick J.S."/>
            <person name="Hume D.A."/>
            <person name="Kai C."/>
            <person name="Sasaki D."/>
            <person name="Tomaru Y."/>
            <person name="Fukuda S."/>
            <person name="Kanamori-Katayama M."/>
            <person name="Suzuki M."/>
            <person name="Aoki J."/>
            <person name="Arakawa T."/>
            <person name="Iida J."/>
            <person name="Imamura K."/>
            <person name="Itoh M."/>
            <person name="Kato T."/>
            <person name="Kawaji H."/>
            <person name="Kawagashira N."/>
            <person name="Kawashima T."/>
            <person name="Kojima M."/>
            <person name="Kondo S."/>
            <person name="Konno H."/>
            <person name="Nakano K."/>
            <person name="Ninomiya N."/>
            <person name="Nishio T."/>
            <person name="Okada M."/>
            <person name="Plessy C."/>
            <person name="Shibata K."/>
            <person name="Shiraki T."/>
            <person name="Suzuki S."/>
            <person name="Tagami M."/>
            <person name="Waki K."/>
            <person name="Watahiki A."/>
            <person name="Okamura-Oho Y."/>
            <person name="Suzuki H."/>
            <person name="Kawai J."/>
            <person name="Hayashizaki Y."/>
        </authorList>
    </citation>
    <scope>NUCLEOTIDE SEQUENCE [LARGE SCALE MRNA] (ISOFORM 2)</scope>
    <source>
        <strain>C57BL/6J</strain>
        <tissue>Olfactory bulb</tissue>
    </source>
</reference>
<reference key="3">
    <citation type="journal article" date="2004" name="Genome Res.">
        <title>The status, quality, and expansion of the NIH full-length cDNA project: the Mammalian Gene Collection (MGC).</title>
        <authorList>
            <consortium name="The MGC Project Team"/>
        </authorList>
    </citation>
    <scope>NUCLEOTIDE SEQUENCE [LARGE SCALE MRNA] (ISOFORM 1)</scope>
    <source>
        <strain>FVB/N</strain>
        <tissue>Salivary gland</tissue>
    </source>
</reference>
<reference key="4">
    <citation type="journal article" date="2011" name="J. Biol. Chem.">
        <title>Post-translational modifications of the gamma-subunit affect intracellular trafficking and complex assembly of GlcNAc-1-phosphotransferase.</title>
        <authorList>
            <person name="Encarnacao M."/>
            <person name="Kollmann K."/>
            <person name="Trusch M."/>
            <person name="Braulke T."/>
            <person name="Pohl S."/>
        </authorList>
    </citation>
    <scope>SUBCELLULAR LOCATION</scope>
    <scope>GLYCOSYLATION AT ASN-88 AND ASN-115</scope>
    <scope>MUTAGENESIS OF CYS-84; ASN-88; ASN-115; CYS-142; CYS-157; CYS-169 AND CYS-245</scope>
</reference>
<dbReference type="EMBL" id="AY465529">
    <property type="protein sequence ID" value="AAR19081.1"/>
    <property type="molecule type" value="mRNA"/>
</dbReference>
<dbReference type="EMBL" id="AK078230">
    <property type="protein sequence ID" value="BAC37183.1"/>
    <property type="molecule type" value="mRNA"/>
</dbReference>
<dbReference type="EMBL" id="BC055872">
    <property type="protein sequence ID" value="AAH55872.1"/>
    <property type="molecule type" value="mRNA"/>
</dbReference>
<dbReference type="CCDS" id="CCDS28511.1">
    <molecule id="Q6S5C2-1"/>
</dbReference>
<dbReference type="CCDS" id="CCDS89019.1">
    <molecule id="Q6S5C2-2"/>
</dbReference>
<dbReference type="RefSeq" id="NP_001333666.1">
    <property type="nucleotide sequence ID" value="NM_001346737.1"/>
</dbReference>
<dbReference type="RefSeq" id="NP_766117.2">
    <property type="nucleotide sequence ID" value="NM_172529.3"/>
</dbReference>
<dbReference type="SMR" id="Q6S5C2"/>
<dbReference type="BioGRID" id="229533">
    <property type="interactions" value="1"/>
</dbReference>
<dbReference type="FunCoup" id="Q6S5C2">
    <property type="interactions" value="465"/>
</dbReference>
<dbReference type="STRING" id="10090.ENSMUSP00000042073"/>
<dbReference type="GlyConnect" id="2526">
    <property type="glycosylation" value="2 N-Linked glycans (1 site)"/>
</dbReference>
<dbReference type="GlyCosmos" id="Q6S5C2">
    <property type="glycosylation" value="2 sites, 2 glycans"/>
</dbReference>
<dbReference type="GlyGen" id="Q6S5C2">
    <property type="glycosylation" value="2 sites, 3 N-linked glycans (1 site)"/>
</dbReference>
<dbReference type="iPTMnet" id="Q6S5C2"/>
<dbReference type="PhosphoSitePlus" id="Q6S5C2"/>
<dbReference type="CPTAC" id="non-CPTAC-3984"/>
<dbReference type="PaxDb" id="10090-ENSMUSP00000110807"/>
<dbReference type="PeptideAtlas" id="Q6S5C2"/>
<dbReference type="ProteomicsDB" id="267644">
    <molecule id="Q6S5C2-1"/>
</dbReference>
<dbReference type="ProteomicsDB" id="267645">
    <molecule id="Q6S5C2-2"/>
</dbReference>
<dbReference type="Pumba" id="Q6S5C2"/>
<dbReference type="DNASU" id="214505"/>
<dbReference type="GeneID" id="214505"/>
<dbReference type="KEGG" id="mmu:214505"/>
<dbReference type="UCSC" id="uc008bab.2">
    <molecule id="Q6S5C2-1"/>
    <property type="organism name" value="mouse"/>
</dbReference>
<dbReference type="UCSC" id="uc008bac.2">
    <molecule id="Q6S5C2-2"/>
    <property type="organism name" value="mouse"/>
</dbReference>
<dbReference type="AGR" id="MGI:2147006"/>
<dbReference type="CTD" id="84572"/>
<dbReference type="MGI" id="MGI:2147006">
    <property type="gene designation" value="Gnptg"/>
</dbReference>
<dbReference type="eggNOG" id="KOG2397">
    <property type="taxonomic scope" value="Eukaryota"/>
</dbReference>
<dbReference type="InParanoid" id="Q6S5C2"/>
<dbReference type="OrthoDB" id="28322at2759"/>
<dbReference type="PhylomeDB" id="Q6S5C2"/>
<dbReference type="TreeFam" id="TF329550"/>
<dbReference type="BRENDA" id="2.7.8.17">
    <property type="organism ID" value="3474"/>
</dbReference>
<dbReference type="BioGRID-ORCS" id="214505">
    <property type="hits" value="4 hits in 77 CRISPR screens"/>
</dbReference>
<dbReference type="ChiTaRS" id="Gnptg">
    <property type="organism name" value="mouse"/>
</dbReference>
<dbReference type="PRO" id="PR:Q6S5C2"/>
<dbReference type="Proteomes" id="UP000000589">
    <property type="component" value="Unplaced"/>
</dbReference>
<dbReference type="RNAct" id="Q6S5C2">
    <property type="molecule type" value="protein"/>
</dbReference>
<dbReference type="GO" id="GO:0005576">
    <property type="term" value="C:extracellular region"/>
    <property type="evidence" value="ECO:0007669"/>
    <property type="project" value="UniProtKB-SubCell"/>
</dbReference>
<dbReference type="GO" id="GO:0005794">
    <property type="term" value="C:Golgi apparatus"/>
    <property type="evidence" value="ECO:0000314"/>
    <property type="project" value="UniProtKB"/>
</dbReference>
<dbReference type="GO" id="GO:0042803">
    <property type="term" value="F:protein homodimerization activity"/>
    <property type="evidence" value="ECO:0000314"/>
    <property type="project" value="UniProtKB"/>
</dbReference>
<dbReference type="GO" id="GO:0046835">
    <property type="term" value="P:carbohydrate phosphorylation"/>
    <property type="evidence" value="ECO:0000250"/>
    <property type="project" value="UniProtKB"/>
</dbReference>
<dbReference type="FunFam" id="2.70.130.10:FF:000018">
    <property type="entry name" value="N-acetylglucosamine-1-phosphotransferase subunit gamma"/>
    <property type="match status" value="1"/>
</dbReference>
<dbReference type="Gene3D" id="2.70.130.10">
    <property type="entry name" value="Mannose-6-phosphate receptor binding domain"/>
    <property type="match status" value="1"/>
</dbReference>
<dbReference type="InterPro" id="IPR010506">
    <property type="entry name" value="DMAP1-bd"/>
</dbReference>
<dbReference type="InterPro" id="IPR039794">
    <property type="entry name" value="Gtb1-like"/>
</dbReference>
<dbReference type="InterPro" id="IPR009011">
    <property type="entry name" value="Man6P_isomerase_rcpt-bd_dom_sf"/>
</dbReference>
<dbReference type="InterPro" id="IPR044865">
    <property type="entry name" value="MRH_dom"/>
</dbReference>
<dbReference type="InterPro" id="IPR012913">
    <property type="entry name" value="OS9-like_dom"/>
</dbReference>
<dbReference type="PANTHER" id="PTHR12630:SF6">
    <property type="entry name" value="N-ACETYLGLUCOSAMINE-1-PHOSPHOTRANSFERASE SUBUNIT GAMMA"/>
    <property type="match status" value="1"/>
</dbReference>
<dbReference type="PANTHER" id="PTHR12630">
    <property type="entry name" value="N-LINKED OLIGOSACCHARIDE PROCESSING"/>
    <property type="match status" value="1"/>
</dbReference>
<dbReference type="Pfam" id="PF07915">
    <property type="entry name" value="PRKCSH"/>
    <property type="match status" value="1"/>
</dbReference>
<dbReference type="SMART" id="SM01137">
    <property type="entry name" value="DMAP_binding"/>
    <property type="match status" value="1"/>
</dbReference>
<dbReference type="SUPFAM" id="SSF50911">
    <property type="entry name" value="Mannose 6-phosphate receptor domain"/>
    <property type="match status" value="1"/>
</dbReference>
<dbReference type="PROSITE" id="PS51912">
    <property type="entry name" value="DMAP1_BIND"/>
    <property type="match status" value="1"/>
</dbReference>
<dbReference type="PROSITE" id="PS51914">
    <property type="entry name" value="MRH"/>
    <property type="match status" value="1"/>
</dbReference>
<comment type="function">
    <text evidence="5">Non-catalytic subunit of the N-acetylglucosamine-1-phosphotransferase complex, an enzyme that catalyzes the formation of mannose 6-phosphate (M6P) markers on high mannose type oligosaccharides in the Golgi apparatus. Binds and presents the high mannose glycans of the acceptor to the catalytic alpha and beta subunits (GNPTAB). Enhances the rate of N-acetylglucosamine-1-phosphate transfer to the oligosaccharides of acid hydrolase acceptors.</text>
</comment>
<comment type="subunit">
    <text evidence="1">Homodimer; disulfide-linked. Hexamer of two alpha (GNPTAB), two beta (GNPTAB) and two gamma (GNPTG) subunits; disulfide-linked. The alpha and/or the beta subunits of the enzyme constitute the catalytic subunits (By similarity).</text>
</comment>
<comment type="subcellular location">
    <subcellularLocation>
        <location>Secreted</location>
    </subcellularLocation>
    <subcellularLocation>
        <location>Golgi apparatus</location>
    </subcellularLocation>
</comment>
<comment type="alternative products">
    <event type="alternative splicing"/>
    <isoform>
        <id>Q6S5C2-1</id>
        <name>1</name>
        <sequence type="displayed"/>
    </isoform>
    <isoform>
        <id>Q6S5C2-2</id>
        <name>2</name>
        <sequence type="described" ref="VSP_014758"/>
    </isoform>
</comment>
<comment type="tissue specificity">
    <text evidence="5">Widely expressed. Highly expressed in the liver, intestine, brain, thymus, testis and ovary.</text>
</comment>
<comment type="PTM">
    <text evidence="6">Cys-245 mediates the formation of the interchain disulfide bond for formation of the homodimer. Cys-142, Cys-157 and Cys-169 are involved in intramolecular disulfide bonds formation (PubMed:21173149).</text>
</comment>
<accession>Q6S5C2</accession>
<accession>Q7TNE0</accession>
<accession>Q8C5J3</accession>
<feature type="signal peptide" evidence="2">
    <location>
        <begin position="1"/>
        <end position="24"/>
    </location>
</feature>
<feature type="chain" id="PRO_0000019578" description="N-acetylglucosamine-1-phosphotransferase subunit gamma">
    <location>
        <begin position="25"/>
        <end position="307"/>
    </location>
</feature>
<feature type="domain" description="MRH" evidence="4">
    <location>
        <begin position="69"/>
        <end position="171"/>
    </location>
</feature>
<feature type="domain" description="DMAP1-binding" evidence="3">
    <location>
        <begin position="176"/>
        <end position="279"/>
    </location>
</feature>
<feature type="glycosylation site" description="N-linked (GlcNAc...) asparagine" evidence="6">
    <location>
        <position position="88"/>
    </location>
</feature>
<feature type="glycosylation site" description="N-linked (GlcNAc...) asparagine" evidence="6">
    <location>
        <position position="115"/>
    </location>
</feature>
<feature type="disulfide bond" evidence="4">
    <location>
        <begin position="71"/>
        <end position="84"/>
    </location>
</feature>
<feature type="disulfide bond" evidence="4">
    <location>
        <begin position="129"/>
        <end position="157"/>
    </location>
</feature>
<feature type="disulfide bond" evidence="4">
    <location>
        <begin position="142"/>
        <end position="169"/>
    </location>
</feature>
<feature type="disulfide bond" description="Interchain">
    <location>
        <position position="245"/>
    </location>
</feature>
<feature type="splice variant" id="VSP_014758" description="In isoform 2." evidence="7">
    <original>K</original>
    <variation>KPLRLSSQ</variation>
    <location>
        <position position="137"/>
    </location>
</feature>
<feature type="mutagenesis site" description="Abolishes homodimerization; when associated with S-157 and S-245. Does not affect homodimerization; when associated with S-157." evidence="6">
    <original>C</original>
    <variation>S</variation>
    <location>
        <position position="84"/>
    </location>
</feature>
<feature type="mutagenesis site" description="Abolishes localization to the Golgi apparatus; when associated with Q-115." evidence="6">
    <original>N</original>
    <variation>Q</variation>
    <location>
        <position position="88"/>
    </location>
</feature>
<feature type="mutagenesis site" description="Abolishes localization to the Golgi apparatus; when associated with Q-88." evidence="6">
    <original>N</original>
    <variation>Q</variation>
    <location>
        <position position="115"/>
    </location>
</feature>
<feature type="mutagenesis site" description="Does not affect homodimerization." evidence="6">
    <original>C</original>
    <variation>S</variation>
    <location>
        <position position="142"/>
    </location>
</feature>
<feature type="mutagenesis site" description="Abolishes homodimerization; when associated with S-84 S-245." evidence="6">
    <original>C</original>
    <variation>S</variation>
    <location>
        <position position="157"/>
    </location>
</feature>
<feature type="mutagenesis site" description="Does not affect homodimerization." evidence="6">
    <original>C</original>
    <variation>S</variation>
    <location>
        <position position="169"/>
    </location>
</feature>
<feature type="mutagenesis site" description="Abolishes homodimerization. Abolishes homodimerization; when associated with S-84 and S-157." evidence="6">
    <original>C</original>
    <variation>S</variation>
    <location>
        <position position="245"/>
    </location>
</feature>